<gene>
    <name type="ordered locus">YPL114W</name>
</gene>
<feature type="chain" id="PRO_0000299803" description="Putative uncharacterized protein YPL114W">
    <location>
        <begin position="1"/>
        <end position="139"/>
    </location>
</feature>
<feature type="transmembrane region" description="Helical" evidence="1">
    <location>
        <begin position="22"/>
        <end position="38"/>
    </location>
</feature>
<feature type="sequence conflict" description="In Ref. 3; AAT93317." evidence="2" ref="3">
    <original>P</original>
    <variation>S</variation>
    <location>
        <position position="9"/>
    </location>
</feature>
<evidence type="ECO:0000255" key="1"/>
<evidence type="ECO:0000305" key="2"/>
<evidence type="ECO:0000305" key="3">
    <source>
    </source>
</evidence>
<reference key="1">
    <citation type="journal article" date="1997" name="Nature">
        <title>The nucleotide sequence of Saccharomyces cerevisiae chromosome XVI.</title>
        <authorList>
            <person name="Bussey H."/>
            <person name="Storms R.K."/>
            <person name="Ahmed A."/>
            <person name="Albermann K."/>
            <person name="Allen E."/>
            <person name="Ansorge W."/>
            <person name="Araujo R."/>
            <person name="Aparicio A."/>
            <person name="Barrell B.G."/>
            <person name="Badcock K."/>
            <person name="Benes V."/>
            <person name="Botstein D."/>
            <person name="Bowman S."/>
            <person name="Brueckner M."/>
            <person name="Carpenter J."/>
            <person name="Cherry J.M."/>
            <person name="Chung E."/>
            <person name="Churcher C.M."/>
            <person name="Coster F."/>
            <person name="Davis K."/>
            <person name="Davis R.W."/>
            <person name="Dietrich F.S."/>
            <person name="Delius H."/>
            <person name="DiPaolo T."/>
            <person name="Dubois E."/>
            <person name="Duesterhoeft A."/>
            <person name="Duncan M."/>
            <person name="Floeth M."/>
            <person name="Fortin N."/>
            <person name="Friesen J.D."/>
            <person name="Fritz C."/>
            <person name="Goffeau A."/>
            <person name="Hall J."/>
            <person name="Hebling U."/>
            <person name="Heumann K."/>
            <person name="Hilbert H."/>
            <person name="Hillier L.W."/>
            <person name="Hunicke-Smith S."/>
            <person name="Hyman R.W."/>
            <person name="Johnston M."/>
            <person name="Kalman S."/>
            <person name="Kleine K."/>
            <person name="Komp C."/>
            <person name="Kurdi O."/>
            <person name="Lashkari D."/>
            <person name="Lew H."/>
            <person name="Lin A."/>
            <person name="Lin D."/>
            <person name="Louis E.J."/>
            <person name="Marathe R."/>
            <person name="Messenguy F."/>
            <person name="Mewes H.-W."/>
            <person name="Mirtipati S."/>
            <person name="Moestl D."/>
            <person name="Mueller-Auer S."/>
            <person name="Namath A."/>
            <person name="Nentwich U."/>
            <person name="Oefner P."/>
            <person name="Pearson D."/>
            <person name="Petel F.X."/>
            <person name="Pohl T.M."/>
            <person name="Purnelle B."/>
            <person name="Rajandream M.A."/>
            <person name="Rechmann S."/>
            <person name="Rieger M."/>
            <person name="Riles L."/>
            <person name="Roberts D."/>
            <person name="Schaefer M."/>
            <person name="Scharfe M."/>
            <person name="Scherens B."/>
            <person name="Schramm S."/>
            <person name="Schroeder M."/>
            <person name="Sdicu A.-M."/>
            <person name="Tettelin H."/>
            <person name="Urrestarazu L.A."/>
            <person name="Ushinsky S."/>
            <person name="Vierendeels F."/>
            <person name="Vissers S."/>
            <person name="Voss H."/>
            <person name="Walsh S.V."/>
            <person name="Wambutt R."/>
            <person name="Wang Y."/>
            <person name="Wedler E."/>
            <person name="Wedler H."/>
            <person name="Winnett E."/>
            <person name="Zhong W.-W."/>
            <person name="Zollner A."/>
            <person name="Vo D.H."/>
            <person name="Hani J."/>
        </authorList>
    </citation>
    <scope>NUCLEOTIDE SEQUENCE [LARGE SCALE GENOMIC DNA]</scope>
    <source>
        <strain>ATCC 204508 / S288c</strain>
    </source>
</reference>
<reference key="2">
    <citation type="journal article" date="2014" name="G3 (Bethesda)">
        <title>The reference genome sequence of Saccharomyces cerevisiae: Then and now.</title>
        <authorList>
            <person name="Engel S.R."/>
            <person name="Dietrich F.S."/>
            <person name="Fisk D.G."/>
            <person name="Binkley G."/>
            <person name="Balakrishnan R."/>
            <person name="Costanzo M.C."/>
            <person name="Dwight S.S."/>
            <person name="Hitz B.C."/>
            <person name="Karra K."/>
            <person name="Nash R.S."/>
            <person name="Weng S."/>
            <person name="Wong E.D."/>
            <person name="Lloyd P."/>
            <person name="Skrzypek M.S."/>
            <person name="Miyasato S.R."/>
            <person name="Simison M."/>
            <person name="Cherry J.M."/>
        </authorList>
    </citation>
    <scope>GENOME REANNOTATION</scope>
    <source>
        <strain>ATCC 204508 / S288c</strain>
    </source>
</reference>
<reference key="3">
    <citation type="journal article" date="2007" name="Genome Res.">
        <title>Approaching a complete repository of sequence-verified protein-encoding clones for Saccharomyces cerevisiae.</title>
        <authorList>
            <person name="Hu Y."/>
            <person name="Rolfs A."/>
            <person name="Bhullar B."/>
            <person name="Murthy T.V.S."/>
            <person name="Zhu C."/>
            <person name="Berger M.F."/>
            <person name="Camargo A.A."/>
            <person name="Kelley F."/>
            <person name="McCarron S."/>
            <person name="Jepson D."/>
            <person name="Richardson A."/>
            <person name="Raphael J."/>
            <person name="Moreira D."/>
            <person name="Taycher E."/>
            <person name="Zuo D."/>
            <person name="Mohr S."/>
            <person name="Kane M.F."/>
            <person name="Williamson J."/>
            <person name="Simpson A.J.G."/>
            <person name="Bulyk M.L."/>
            <person name="Harlow E."/>
            <person name="Marsischky G."/>
            <person name="Kolodner R.D."/>
            <person name="LaBaer J."/>
        </authorList>
    </citation>
    <scope>NUCLEOTIDE SEQUENCE [GENOMIC DNA]</scope>
    <source>
        <strain>ATCC 204508 / S288c</strain>
    </source>
</reference>
<name>YPL14_YEAST</name>
<organism>
    <name type="scientific">Saccharomyces cerevisiae (strain ATCC 204508 / S288c)</name>
    <name type="common">Baker's yeast</name>
    <dbReference type="NCBI Taxonomy" id="559292"/>
    <lineage>
        <taxon>Eukaryota</taxon>
        <taxon>Fungi</taxon>
        <taxon>Dikarya</taxon>
        <taxon>Ascomycota</taxon>
        <taxon>Saccharomycotina</taxon>
        <taxon>Saccharomycetes</taxon>
        <taxon>Saccharomycetales</taxon>
        <taxon>Saccharomycetaceae</taxon>
        <taxon>Saccharomyces</taxon>
    </lineage>
</organism>
<sequence length="139" mass="15114">MVQLSTYLPSPPSTNMSCTFSSVMSVCFMTMSATVLPICGKAVTSHLRSNSCLTRVSSFLNTSRPQLATFPDSRASSSTSSSMHVPLPTLTILTPSLHQAKLLRLIILFVEAVLGKAKMIKSAFFQVFGSSRSEWYLAL</sequence>
<protein>
    <recommendedName>
        <fullName>Putative uncharacterized protein YPL114W</fullName>
    </recommendedName>
</protein>
<comment type="subcellular location">
    <subcellularLocation>
        <location evidence="2">Membrane</location>
        <topology evidence="2">Single-pass membrane protein</topology>
    </subcellularLocation>
</comment>
<comment type="miscellaneous">
    <text evidence="2">Almost completely overlaps YPL113C.</text>
</comment>
<comment type="caution">
    <text evidence="3">Product of a dubious gene prediction unlikely to encode a functional protein. Because of that it is not part of the S.cerevisiae S288c complete/reference proteome set.</text>
</comment>
<dbReference type="EMBL" id="U43503">
    <property type="protein sequence ID" value="AAB68253.1"/>
    <property type="molecule type" value="Genomic_DNA"/>
</dbReference>
<dbReference type="EMBL" id="AY693298">
    <property type="protein sequence ID" value="AAT93317.1"/>
    <property type="molecule type" value="Genomic_DNA"/>
</dbReference>
<dbReference type="PIR" id="S69458">
    <property type="entry name" value="S69458"/>
</dbReference>
<dbReference type="DIP" id="DIP-4005N"/>
<dbReference type="IntAct" id="O13518">
    <property type="interactions" value="1"/>
</dbReference>
<dbReference type="PaxDb" id="4932-YPL114W"/>
<dbReference type="EnsemblFungi" id="YPL114W_mRNA">
    <property type="protein sequence ID" value="YPL114W"/>
    <property type="gene ID" value="YPL114W"/>
</dbReference>
<dbReference type="AGR" id="SGD:S000006035"/>
<dbReference type="SGD" id="S000006035">
    <property type="gene designation" value="YPL114W"/>
</dbReference>
<dbReference type="HOGENOM" id="CLU_1846698_0_0_1"/>
<dbReference type="GO" id="GO:0016020">
    <property type="term" value="C:membrane"/>
    <property type="evidence" value="ECO:0007669"/>
    <property type="project" value="UniProtKB-SubCell"/>
</dbReference>
<proteinExistence type="uncertain"/>
<keyword id="KW-0472">Membrane</keyword>
<keyword id="KW-0812">Transmembrane</keyword>
<keyword id="KW-1133">Transmembrane helix</keyword>
<accession>O13518</accession>
<accession>Q6B0Y2</accession>